<comment type="function">
    <text evidence="2">Binds directly to 23S rRNA. Might be involved in E site tRNA release (Potential).</text>
</comment>
<comment type="subunit">
    <text evidence="1">Part of the 50S ribosomal subunit.</text>
</comment>
<comment type="subcellular location">
    <subcellularLocation>
        <location>Plastid</location>
        <location>Chloroplast</location>
    </subcellularLocation>
</comment>
<comment type="similarity">
    <text evidence="2">Belongs to the universal ribosomal protein uL1 family.</text>
</comment>
<proteinExistence type="inferred from homology"/>
<evidence type="ECO:0000250" key="1"/>
<evidence type="ECO:0000305" key="2"/>
<name>RK1_RHDSA</name>
<protein>
    <recommendedName>
        <fullName evidence="2">Large ribosomal subunit protein uL1c</fullName>
    </recommendedName>
    <alternativeName>
        <fullName>50S ribosomal protein L1, chloroplastic</fullName>
    </alternativeName>
</protein>
<organism>
    <name type="scientific">Rhodomonas salina</name>
    <name type="common">Cryptomonas salina</name>
    <dbReference type="NCBI Taxonomy" id="52970"/>
    <lineage>
        <taxon>Eukaryota</taxon>
        <taxon>Cryptophyceae</taxon>
        <taxon>Pyrenomonadales</taxon>
        <taxon>Pyrenomonadaceae</taxon>
        <taxon>Rhodomonas</taxon>
    </lineage>
</organism>
<geneLocation type="chloroplast"/>
<dbReference type="EMBL" id="EF508371">
    <property type="protein sequence ID" value="ABO70725.1"/>
    <property type="molecule type" value="Genomic_DNA"/>
</dbReference>
<dbReference type="RefSeq" id="YP_001293477.1">
    <property type="nucleotide sequence ID" value="NC_009573.1"/>
</dbReference>
<dbReference type="SMR" id="A6MVP8"/>
<dbReference type="GeneID" id="5228653"/>
<dbReference type="GO" id="GO:0009507">
    <property type="term" value="C:chloroplast"/>
    <property type="evidence" value="ECO:0007669"/>
    <property type="project" value="UniProtKB-SubCell"/>
</dbReference>
<dbReference type="GO" id="GO:0015934">
    <property type="term" value="C:large ribosomal subunit"/>
    <property type="evidence" value="ECO:0007669"/>
    <property type="project" value="InterPro"/>
</dbReference>
<dbReference type="GO" id="GO:0019843">
    <property type="term" value="F:rRNA binding"/>
    <property type="evidence" value="ECO:0007669"/>
    <property type="project" value="UniProtKB-UniRule"/>
</dbReference>
<dbReference type="GO" id="GO:0003735">
    <property type="term" value="F:structural constituent of ribosome"/>
    <property type="evidence" value="ECO:0007669"/>
    <property type="project" value="InterPro"/>
</dbReference>
<dbReference type="GO" id="GO:0006412">
    <property type="term" value="P:translation"/>
    <property type="evidence" value="ECO:0007669"/>
    <property type="project" value="UniProtKB-UniRule"/>
</dbReference>
<dbReference type="CDD" id="cd00403">
    <property type="entry name" value="Ribosomal_L1"/>
    <property type="match status" value="1"/>
</dbReference>
<dbReference type="FunFam" id="3.40.50.790:FF:000001">
    <property type="entry name" value="50S ribosomal protein L1"/>
    <property type="match status" value="1"/>
</dbReference>
<dbReference type="Gene3D" id="3.30.190.20">
    <property type="match status" value="1"/>
</dbReference>
<dbReference type="Gene3D" id="3.40.50.790">
    <property type="match status" value="1"/>
</dbReference>
<dbReference type="HAMAP" id="MF_01318_B">
    <property type="entry name" value="Ribosomal_uL1_B"/>
    <property type="match status" value="1"/>
</dbReference>
<dbReference type="InterPro" id="IPR005878">
    <property type="entry name" value="Ribosom_uL1_bac-type"/>
</dbReference>
<dbReference type="InterPro" id="IPR002143">
    <property type="entry name" value="Ribosomal_uL1"/>
</dbReference>
<dbReference type="InterPro" id="IPR023674">
    <property type="entry name" value="Ribosomal_uL1-like"/>
</dbReference>
<dbReference type="InterPro" id="IPR028364">
    <property type="entry name" value="Ribosomal_uL1/biogenesis"/>
</dbReference>
<dbReference type="InterPro" id="IPR016095">
    <property type="entry name" value="Ribosomal_uL1_3-a/b-sand"/>
</dbReference>
<dbReference type="InterPro" id="IPR023673">
    <property type="entry name" value="Ribosomal_uL1_CS"/>
</dbReference>
<dbReference type="NCBIfam" id="TIGR01169">
    <property type="entry name" value="rplA_bact"/>
    <property type="match status" value="1"/>
</dbReference>
<dbReference type="PANTHER" id="PTHR36427">
    <property type="entry name" value="54S RIBOSOMAL PROTEIN L1, MITOCHONDRIAL"/>
    <property type="match status" value="1"/>
</dbReference>
<dbReference type="PANTHER" id="PTHR36427:SF3">
    <property type="entry name" value="LARGE RIBOSOMAL SUBUNIT PROTEIN UL1M"/>
    <property type="match status" value="1"/>
</dbReference>
<dbReference type="Pfam" id="PF00687">
    <property type="entry name" value="Ribosomal_L1"/>
    <property type="match status" value="1"/>
</dbReference>
<dbReference type="PIRSF" id="PIRSF002155">
    <property type="entry name" value="Ribosomal_L1"/>
    <property type="match status" value="1"/>
</dbReference>
<dbReference type="SUPFAM" id="SSF56808">
    <property type="entry name" value="Ribosomal protein L1"/>
    <property type="match status" value="1"/>
</dbReference>
<dbReference type="PROSITE" id="PS01199">
    <property type="entry name" value="RIBOSOMAL_L1"/>
    <property type="match status" value="1"/>
</dbReference>
<feature type="chain" id="PRO_0000308158" description="Large ribosomal subunit protein uL1c">
    <location>
        <begin position="1"/>
        <end position="234"/>
    </location>
</feature>
<keyword id="KW-0150">Chloroplast</keyword>
<keyword id="KW-0934">Plastid</keyword>
<keyword id="KW-0687">Ribonucleoprotein</keyword>
<keyword id="KW-0689">Ribosomal protein</keyword>
<keyword id="KW-0694">RNA-binding</keyword>
<keyword id="KW-0699">rRNA-binding</keyword>
<sequence>MAKVSQRVKKIQTKVELRPYKGTEALNLLKELATAKFTETAEAHISLKIDTKYADQQLRTTLVLPKGTGKKVRIAVVAQGEKINEALAAGADLAGAEDLIQNIMKGDLDFDRLIATPDMMPAIAKLGKVLGPRGLMPSPKSGTVTADIKEAIDEFKKGKLEYRADKSGIVHILFGKTDFSVEDLLANLEAVQESIDKNRPSGVKGRYWKSFYICSTMGPSIQLDISEFRDKVFS</sequence>
<reference key="1">
    <citation type="journal article" date="2007" name="Mol. Biol. Evol.">
        <title>Plastid genome sequence of the cryptophyte alga Rhodomonas salina CCMP1319: lateral transfer of putative DNA replication machinery and a test of chromist plastid phylogeny.</title>
        <authorList>
            <person name="Khan H."/>
            <person name="Parks N."/>
            <person name="Kozera C."/>
            <person name="Curtis B.A."/>
            <person name="Parsons B.J."/>
            <person name="Bowman S."/>
            <person name="Archibald J.M."/>
        </authorList>
    </citation>
    <scope>NUCLEOTIDE SEQUENCE [LARGE SCALE GENOMIC DNA]</scope>
    <source>
        <strain>CCMP1319 / NEPCC76 / CS-174</strain>
    </source>
</reference>
<gene>
    <name type="primary">rpl1</name>
</gene>
<accession>A6MVP8</accession>